<dbReference type="EMBL" id="AB017508">
    <property type="protein sequence ID" value="BAA75285.1"/>
    <property type="molecule type" value="Genomic_DNA"/>
</dbReference>
<dbReference type="EMBL" id="BA000004">
    <property type="protein sequence ID" value="BAB03867.1"/>
    <property type="molecule type" value="Genomic_DNA"/>
</dbReference>
<dbReference type="PIR" id="T44397">
    <property type="entry name" value="T44397"/>
</dbReference>
<dbReference type="RefSeq" id="WP_010896331.1">
    <property type="nucleotide sequence ID" value="NC_002570.2"/>
</dbReference>
<dbReference type="SMR" id="Q9Z9K0"/>
<dbReference type="STRING" id="272558.gene:10725988"/>
<dbReference type="GeneID" id="87595689"/>
<dbReference type="KEGG" id="bha:BH0148"/>
<dbReference type="eggNOG" id="COG0096">
    <property type="taxonomic scope" value="Bacteria"/>
</dbReference>
<dbReference type="HOGENOM" id="CLU_098428_0_2_9"/>
<dbReference type="OrthoDB" id="9802617at2"/>
<dbReference type="Proteomes" id="UP000001258">
    <property type="component" value="Chromosome"/>
</dbReference>
<dbReference type="GO" id="GO:1990904">
    <property type="term" value="C:ribonucleoprotein complex"/>
    <property type="evidence" value="ECO:0007669"/>
    <property type="project" value="UniProtKB-KW"/>
</dbReference>
<dbReference type="GO" id="GO:0005840">
    <property type="term" value="C:ribosome"/>
    <property type="evidence" value="ECO:0007669"/>
    <property type="project" value="UniProtKB-KW"/>
</dbReference>
<dbReference type="GO" id="GO:0019843">
    <property type="term" value="F:rRNA binding"/>
    <property type="evidence" value="ECO:0007669"/>
    <property type="project" value="UniProtKB-UniRule"/>
</dbReference>
<dbReference type="GO" id="GO:0003735">
    <property type="term" value="F:structural constituent of ribosome"/>
    <property type="evidence" value="ECO:0007669"/>
    <property type="project" value="InterPro"/>
</dbReference>
<dbReference type="GO" id="GO:0006412">
    <property type="term" value="P:translation"/>
    <property type="evidence" value="ECO:0007669"/>
    <property type="project" value="UniProtKB-UniRule"/>
</dbReference>
<dbReference type="FunFam" id="3.30.1370.30:FF:000002">
    <property type="entry name" value="30S ribosomal protein S8"/>
    <property type="match status" value="1"/>
</dbReference>
<dbReference type="FunFam" id="3.30.1490.10:FF:000001">
    <property type="entry name" value="30S ribosomal protein S8"/>
    <property type="match status" value="1"/>
</dbReference>
<dbReference type="Gene3D" id="3.30.1370.30">
    <property type="match status" value="1"/>
</dbReference>
<dbReference type="Gene3D" id="3.30.1490.10">
    <property type="match status" value="1"/>
</dbReference>
<dbReference type="HAMAP" id="MF_01302_B">
    <property type="entry name" value="Ribosomal_uS8_B"/>
    <property type="match status" value="1"/>
</dbReference>
<dbReference type="InterPro" id="IPR000630">
    <property type="entry name" value="Ribosomal_uS8"/>
</dbReference>
<dbReference type="InterPro" id="IPR047863">
    <property type="entry name" value="Ribosomal_uS8_CS"/>
</dbReference>
<dbReference type="InterPro" id="IPR035987">
    <property type="entry name" value="Ribosomal_uS8_sf"/>
</dbReference>
<dbReference type="NCBIfam" id="NF001109">
    <property type="entry name" value="PRK00136.1"/>
    <property type="match status" value="1"/>
</dbReference>
<dbReference type="PANTHER" id="PTHR11758">
    <property type="entry name" value="40S RIBOSOMAL PROTEIN S15A"/>
    <property type="match status" value="1"/>
</dbReference>
<dbReference type="Pfam" id="PF00410">
    <property type="entry name" value="Ribosomal_S8"/>
    <property type="match status" value="1"/>
</dbReference>
<dbReference type="SUPFAM" id="SSF56047">
    <property type="entry name" value="Ribosomal protein S8"/>
    <property type="match status" value="1"/>
</dbReference>
<dbReference type="PROSITE" id="PS00053">
    <property type="entry name" value="RIBOSOMAL_S8"/>
    <property type="match status" value="1"/>
</dbReference>
<name>RS8_HALH5</name>
<evidence type="ECO:0000250" key="1"/>
<evidence type="ECO:0000255" key="2">
    <source>
        <dbReference type="HAMAP-Rule" id="MF_01302"/>
    </source>
</evidence>
<evidence type="ECO:0000305" key="3"/>
<feature type="initiator methionine" description="Removed" evidence="1">
    <location>
        <position position="1"/>
    </location>
</feature>
<feature type="chain" id="PRO_0000126362" description="Small ribosomal subunit protein uS8">
    <location>
        <begin position="2"/>
        <end position="132"/>
    </location>
</feature>
<comment type="function">
    <text evidence="2">One of the primary rRNA binding proteins, it binds directly to 16S rRNA central domain where it helps coordinate assembly of the platform of the 30S subunit.</text>
</comment>
<comment type="subunit">
    <text evidence="2">Part of the 30S ribosomal subunit. Contacts proteins S5 and S12.</text>
</comment>
<comment type="similarity">
    <text evidence="2">Belongs to the universal ribosomal protein uS8 family.</text>
</comment>
<keyword id="KW-1185">Reference proteome</keyword>
<keyword id="KW-0687">Ribonucleoprotein</keyword>
<keyword id="KW-0689">Ribosomal protein</keyword>
<keyword id="KW-0694">RNA-binding</keyword>
<keyword id="KW-0699">rRNA-binding</keyword>
<reference key="1">
    <citation type="journal article" date="1999" name="Biosci. Biotechnol. Biochem.">
        <title>Sequence analysis of a 32-kb region including the major ribosomal protein gene clusters from alkaliphilic Bacillus sp. strain C-125.</title>
        <authorList>
            <person name="Takami H."/>
            <person name="Takaki Y."/>
            <person name="Nakasone K."/>
            <person name="Hirama C."/>
            <person name="Inoue A."/>
            <person name="Horikoshi K."/>
        </authorList>
    </citation>
    <scope>NUCLEOTIDE SEQUENCE [GENOMIC DNA]</scope>
    <source>
        <strain>ATCC BAA-125 / DSM 18197 / FERM 7344 / JCM 9153 / C-125</strain>
    </source>
</reference>
<reference key="2">
    <citation type="journal article" date="2000" name="Nucleic Acids Res.">
        <title>Complete genome sequence of the alkaliphilic bacterium Bacillus halodurans and genomic sequence comparison with Bacillus subtilis.</title>
        <authorList>
            <person name="Takami H."/>
            <person name="Nakasone K."/>
            <person name="Takaki Y."/>
            <person name="Maeno G."/>
            <person name="Sasaki R."/>
            <person name="Masui N."/>
            <person name="Fuji F."/>
            <person name="Hirama C."/>
            <person name="Nakamura Y."/>
            <person name="Ogasawara N."/>
            <person name="Kuhara S."/>
            <person name="Horikoshi K."/>
        </authorList>
    </citation>
    <scope>NUCLEOTIDE SEQUENCE [LARGE SCALE GENOMIC DNA]</scope>
    <source>
        <strain>ATCC BAA-125 / DSM 18197 / FERM 7344 / JCM 9153 / C-125</strain>
    </source>
</reference>
<sequence>MVMTDPISDMLTRIRNANTVRHEKLELPASKIKKEIAEILKREGFIRDYEYIEDSKQGVIRIFLKYGSSNERVITGLKRISKPGLRVYAKAGELPRVLGGLGIAIVSTSKGVMTDKEARQQQVGGEVLAYVW</sequence>
<accession>Q9Z9K0</accession>
<accession>Q9JPX3</accession>
<protein>
    <recommendedName>
        <fullName evidence="2">Small ribosomal subunit protein uS8</fullName>
    </recommendedName>
    <alternativeName>
        <fullName evidence="3">30S ribosomal protein S8</fullName>
    </alternativeName>
</protein>
<gene>
    <name evidence="2" type="primary">rpsH</name>
    <name type="ordered locus">BH0148</name>
</gene>
<organism>
    <name type="scientific">Halalkalibacterium halodurans (strain ATCC BAA-125 / DSM 18197 / FERM 7344 / JCM 9153 / C-125)</name>
    <name type="common">Bacillus halodurans</name>
    <dbReference type="NCBI Taxonomy" id="272558"/>
    <lineage>
        <taxon>Bacteria</taxon>
        <taxon>Bacillati</taxon>
        <taxon>Bacillota</taxon>
        <taxon>Bacilli</taxon>
        <taxon>Bacillales</taxon>
        <taxon>Bacillaceae</taxon>
        <taxon>Halalkalibacterium (ex Joshi et al. 2022)</taxon>
    </lineage>
</organism>
<proteinExistence type="inferred from homology"/>